<comment type="function">
    <text>Initiates blood coagulation by forming a complex with circulating factor VII or VIIa. The [TF:VIIa] complex activates factors IX or X by specific limited proteolysis. TF plays a role in normal hemostasis by initiating the cell-surface assembly and propagation of the coagulation protease cascade.</text>
</comment>
<comment type="subunit">
    <text evidence="1">Interacts with HSPE; the interaction, inhibited by heparin, promotes the generation of activated factor X and activates coagulation in the presence of activated factor VII.</text>
</comment>
<comment type="subcellular location">
    <subcellularLocation>
        <location evidence="2">Membrane</location>
        <topology evidence="2">Single-pass type I membrane protein</topology>
    </subcellularLocation>
</comment>
<comment type="tissue specificity">
    <text>Brain, heart.</text>
</comment>
<comment type="similarity">
    <text evidence="4">Belongs to the tissue factor family.</text>
</comment>
<gene>
    <name type="primary">F3</name>
</gene>
<keyword id="KW-0002">3D-structure</keyword>
<keyword id="KW-0094">Blood coagulation</keyword>
<keyword id="KW-1015">Disulfide bond</keyword>
<keyword id="KW-0325">Glycoprotein</keyword>
<keyword id="KW-0356">Hemostasis</keyword>
<keyword id="KW-0449">Lipoprotein</keyword>
<keyword id="KW-0472">Membrane</keyword>
<keyword id="KW-0564">Palmitate</keyword>
<keyword id="KW-1185">Reference proteome</keyword>
<keyword id="KW-0677">Repeat</keyword>
<keyword id="KW-0732">Signal</keyword>
<keyword id="KW-0812">Transmembrane</keyword>
<keyword id="KW-1133">Transmembrane helix</keyword>
<sequence>MAPPTRLQVPRPGTAVPYTVLLGWLLAQVARAADTTGRAYNLTWKSTNFKTILEWEPKSIDHVYTVQISTRLENWKSKCFLTAETECDLTDEVVKDVGQTYMARVLSYPARNGNTTGFPEEPPFRNSPEFTPYLDTNLGQPTIQSFEQVGTKLNVTVQDARTLVRRNGTFLSLRAVFGKDLNYTLYYWRASSTGKKTATTNTNEFLIDVDKGENYCFSVQAVIPSRKRKQRSPESLTECTSREQGRAREMFFIIGAVVVVALLIIVLSVTVYKCRKARAGPSGKESSPLNIA</sequence>
<evidence type="ECO:0000250" key="1"/>
<evidence type="ECO:0000250" key="2">
    <source>
        <dbReference type="UniProtKB" id="P13726"/>
    </source>
</evidence>
<evidence type="ECO:0000255" key="3"/>
<evidence type="ECO:0000305" key="4"/>
<evidence type="ECO:0007829" key="5">
    <source>
        <dbReference type="PDB" id="1A21"/>
    </source>
</evidence>
<feature type="signal peptide">
    <location>
        <begin position="1"/>
        <end position="32"/>
    </location>
</feature>
<feature type="chain" id="PRO_0000033640" description="Tissue factor">
    <location>
        <begin position="33"/>
        <end position="292"/>
    </location>
</feature>
<feature type="topological domain" description="Extracellular" evidence="3">
    <location>
        <begin position="33"/>
        <end position="250"/>
    </location>
</feature>
<feature type="transmembrane region" description="Helical" evidence="3">
    <location>
        <begin position="251"/>
        <end position="271"/>
    </location>
</feature>
<feature type="topological domain" description="Cytoplasmic" evidence="3">
    <location>
        <begin position="272"/>
        <end position="292"/>
    </location>
</feature>
<feature type="domain" description="Fibronectin type-III 1">
    <location>
        <begin position="35"/>
        <end position="126"/>
    </location>
</feature>
<feature type="domain" description="Fibronectin type-III 2">
    <location>
        <begin position="148"/>
        <end position="240"/>
    </location>
</feature>
<feature type="short sequence motif" description="WKS motif">
    <location>
        <begin position="44"/>
        <end position="46"/>
    </location>
</feature>
<feature type="short sequence motif" description="WKS motif">
    <location>
        <begin position="75"/>
        <end position="77"/>
    </location>
</feature>
<feature type="lipid moiety-binding region" description="S-palmitoyl cysteine" evidence="1">
    <location>
        <position position="274"/>
    </location>
</feature>
<feature type="glycosylation site" description="N-linked (GlcNAc...) asparagine" evidence="3">
    <location>
        <position position="41"/>
    </location>
</feature>
<feature type="glycosylation site" description="N-linked (GlcNAc...) asparagine" evidence="3">
    <location>
        <position position="114"/>
    </location>
</feature>
<feature type="glycosylation site" description="N-linked (GlcNAc...) asparagine" evidence="3">
    <location>
        <position position="154"/>
    </location>
</feature>
<feature type="glycosylation site" description="N-linked (GlcNAc...) asparagine" evidence="3">
    <location>
        <position position="167"/>
    </location>
</feature>
<feature type="glycosylation site" description="N-linked (GlcNAc...) asparagine" evidence="3">
    <location>
        <position position="182"/>
    </location>
</feature>
<feature type="disulfide bond">
    <location>
        <begin position="79"/>
        <end position="87"/>
    </location>
</feature>
<feature type="disulfide bond">
    <location>
        <begin position="216"/>
        <end position="239"/>
    </location>
</feature>
<feature type="strand" evidence="5">
    <location>
        <begin position="40"/>
        <end position="47"/>
    </location>
</feature>
<feature type="strand" evidence="5">
    <location>
        <begin position="50"/>
        <end position="56"/>
    </location>
</feature>
<feature type="strand" evidence="5">
    <location>
        <begin position="60"/>
        <end position="69"/>
    </location>
</feature>
<feature type="strand" evidence="5">
    <location>
        <begin position="71"/>
        <end position="73"/>
    </location>
</feature>
<feature type="strand" evidence="5">
    <location>
        <begin position="76"/>
        <end position="88"/>
    </location>
</feature>
<feature type="helix" evidence="5">
    <location>
        <begin position="90"/>
        <end position="93"/>
    </location>
</feature>
<feature type="strand" evidence="5">
    <location>
        <begin position="101"/>
        <end position="109"/>
    </location>
</feature>
<feature type="strand" evidence="5">
    <location>
        <begin position="124"/>
        <end position="126"/>
    </location>
</feature>
<feature type="helix" evidence="5">
    <location>
        <begin position="132"/>
        <end position="135"/>
    </location>
</feature>
<feature type="strand" evidence="5">
    <location>
        <begin position="143"/>
        <end position="149"/>
    </location>
</feature>
<feature type="strand" evidence="5">
    <location>
        <begin position="152"/>
        <end position="157"/>
    </location>
</feature>
<feature type="strand" evidence="5">
    <location>
        <begin position="161"/>
        <end position="163"/>
    </location>
</feature>
<feature type="strand" evidence="5">
    <location>
        <begin position="165"/>
        <end position="168"/>
    </location>
</feature>
<feature type="strand" evidence="5">
    <location>
        <begin position="170"/>
        <end position="172"/>
    </location>
</feature>
<feature type="helix" evidence="5">
    <location>
        <begin position="173"/>
        <end position="177"/>
    </location>
</feature>
<feature type="helix" evidence="5">
    <location>
        <begin position="178"/>
        <end position="180"/>
    </location>
</feature>
<feature type="strand" evidence="5">
    <location>
        <begin position="182"/>
        <end position="188"/>
    </location>
</feature>
<feature type="strand" evidence="5">
    <location>
        <begin position="196"/>
        <end position="208"/>
    </location>
</feature>
<feature type="strand" evidence="5">
    <location>
        <begin position="216"/>
        <end position="222"/>
    </location>
</feature>
<accession>P24055</accession>
<dbReference type="EMBL" id="M55390">
    <property type="protein sequence ID" value="AAA63469.1"/>
    <property type="molecule type" value="mRNA"/>
</dbReference>
<dbReference type="EMBL" id="X53521">
    <property type="protein sequence ID" value="CAA37597.1"/>
    <property type="molecule type" value="mRNA"/>
</dbReference>
<dbReference type="PIR" id="JU0441">
    <property type="entry name" value="KFRB3"/>
</dbReference>
<dbReference type="RefSeq" id="NP_001075760.1">
    <property type="nucleotide sequence ID" value="NM_001082291.1"/>
</dbReference>
<dbReference type="PDB" id="1A21">
    <property type="method" value="X-ray"/>
    <property type="resolution" value="2.35 A"/>
    <property type="chains" value="A/B=33-251"/>
</dbReference>
<dbReference type="PDBsum" id="1A21"/>
<dbReference type="SMR" id="P24055"/>
<dbReference type="FunCoup" id="P24055">
    <property type="interactions" value="11"/>
</dbReference>
<dbReference type="STRING" id="9986.ENSOCUP00000029185"/>
<dbReference type="GlyCosmos" id="P24055">
    <property type="glycosylation" value="5 sites, No reported glycans"/>
</dbReference>
<dbReference type="PaxDb" id="9986-ENSOCUP00000004179"/>
<dbReference type="GeneID" id="100009127"/>
<dbReference type="KEGG" id="ocu:100009127"/>
<dbReference type="CTD" id="2152"/>
<dbReference type="eggNOG" id="ENOG502RA1F">
    <property type="taxonomic scope" value="Eukaryota"/>
</dbReference>
<dbReference type="HOGENOM" id="CLU_082139_0_0_1"/>
<dbReference type="InParanoid" id="P24055"/>
<dbReference type="OMA" id="PINYVYT"/>
<dbReference type="OrthoDB" id="8942372at2759"/>
<dbReference type="TreeFam" id="TF352627"/>
<dbReference type="EvolutionaryTrace" id="P24055"/>
<dbReference type="Proteomes" id="UP000001811">
    <property type="component" value="Unplaced"/>
</dbReference>
<dbReference type="GO" id="GO:0009986">
    <property type="term" value="C:cell surface"/>
    <property type="evidence" value="ECO:0000250"/>
    <property type="project" value="BHF-UCL"/>
</dbReference>
<dbReference type="GO" id="GO:0031012">
    <property type="term" value="C:extracellular matrix"/>
    <property type="evidence" value="ECO:0000250"/>
    <property type="project" value="UniProtKB"/>
</dbReference>
<dbReference type="GO" id="GO:0005615">
    <property type="term" value="C:extracellular space"/>
    <property type="evidence" value="ECO:0000250"/>
    <property type="project" value="UniProtKB"/>
</dbReference>
<dbReference type="GO" id="GO:0005886">
    <property type="term" value="C:plasma membrane"/>
    <property type="evidence" value="ECO:0007669"/>
    <property type="project" value="TreeGrafter"/>
</dbReference>
<dbReference type="GO" id="GO:0004896">
    <property type="term" value="F:cytokine receptor activity"/>
    <property type="evidence" value="ECO:0007669"/>
    <property type="project" value="TreeGrafter"/>
</dbReference>
<dbReference type="GO" id="GO:0005543">
    <property type="term" value="F:phospholipid binding"/>
    <property type="evidence" value="ECO:0000250"/>
    <property type="project" value="UniProtKB"/>
</dbReference>
<dbReference type="GO" id="GO:0002541">
    <property type="term" value="P:activation of plasma proteins involved in acute inflammatory response"/>
    <property type="evidence" value="ECO:0000250"/>
    <property type="project" value="UniProtKB"/>
</dbReference>
<dbReference type="GO" id="GO:0007596">
    <property type="term" value="P:blood coagulation"/>
    <property type="evidence" value="ECO:0007669"/>
    <property type="project" value="UniProtKB-KW"/>
</dbReference>
<dbReference type="GO" id="GO:0045766">
    <property type="term" value="P:positive regulation of angiogenesis"/>
    <property type="evidence" value="ECO:0000250"/>
    <property type="project" value="UniProtKB"/>
</dbReference>
<dbReference type="GO" id="GO:2000353">
    <property type="term" value="P:positive regulation of endothelial cell apoptotic process"/>
    <property type="evidence" value="ECO:0000250"/>
    <property type="project" value="UniProtKB"/>
</dbReference>
<dbReference type="GO" id="GO:0001938">
    <property type="term" value="P:positive regulation of endothelial cell proliferation"/>
    <property type="evidence" value="ECO:0000250"/>
    <property type="project" value="UniProtKB"/>
</dbReference>
<dbReference type="GO" id="GO:0010641">
    <property type="term" value="P:positive regulation of platelet-derived growth factor receptor signaling pathway"/>
    <property type="evidence" value="ECO:0000250"/>
    <property type="project" value="UniProtKB"/>
</dbReference>
<dbReference type="GO" id="GO:0032008">
    <property type="term" value="P:positive regulation of TOR signaling"/>
    <property type="evidence" value="ECO:0000250"/>
    <property type="project" value="UniProtKB"/>
</dbReference>
<dbReference type="FunFam" id="2.60.40.10:FF:000746">
    <property type="entry name" value="Tissue factor"/>
    <property type="match status" value="1"/>
</dbReference>
<dbReference type="Gene3D" id="2.60.40.10">
    <property type="entry name" value="Immunoglobulins"/>
    <property type="match status" value="2"/>
</dbReference>
<dbReference type="InterPro" id="IPR003961">
    <property type="entry name" value="FN3_dom"/>
</dbReference>
<dbReference type="InterPro" id="IPR036116">
    <property type="entry name" value="FN3_sf"/>
</dbReference>
<dbReference type="InterPro" id="IPR013783">
    <property type="entry name" value="Ig-like_fold"/>
</dbReference>
<dbReference type="InterPro" id="IPR015373">
    <property type="entry name" value="Interferon/interleukin_rcp_dom"/>
</dbReference>
<dbReference type="InterPro" id="IPR001187">
    <property type="entry name" value="Tissue_factor"/>
</dbReference>
<dbReference type="InterPro" id="IPR030472">
    <property type="entry name" value="Tissue_Factor_CS"/>
</dbReference>
<dbReference type="InterPro" id="IPR050650">
    <property type="entry name" value="Type-II_Cytokine-TF_Rcpt"/>
</dbReference>
<dbReference type="PANTHER" id="PTHR20859">
    <property type="entry name" value="INTERFERON/INTERLEUKIN RECEPTOR"/>
    <property type="match status" value="1"/>
</dbReference>
<dbReference type="PANTHER" id="PTHR20859:SF22">
    <property type="entry name" value="TISSUE FACTOR"/>
    <property type="match status" value="1"/>
</dbReference>
<dbReference type="Pfam" id="PF09294">
    <property type="entry name" value="Interfer-bind"/>
    <property type="match status" value="1"/>
</dbReference>
<dbReference type="Pfam" id="PF01108">
    <property type="entry name" value="Tissue_fac"/>
    <property type="match status" value="1"/>
</dbReference>
<dbReference type="PIRSF" id="PIRSF002498">
    <property type="entry name" value="Tissue_factor_3"/>
    <property type="match status" value="1"/>
</dbReference>
<dbReference type="PRINTS" id="PR00346">
    <property type="entry name" value="TISSUEFACTOR"/>
</dbReference>
<dbReference type="SUPFAM" id="SSF49265">
    <property type="entry name" value="Fibronectin type III"/>
    <property type="match status" value="2"/>
</dbReference>
<dbReference type="PROSITE" id="PS00621">
    <property type="entry name" value="TISSUE_FACTOR"/>
    <property type="match status" value="1"/>
</dbReference>
<proteinExistence type="evidence at protein level"/>
<reference key="1">
    <citation type="journal article" date="1991" name="Gene">
        <title>Conservation of tissue factor primary sequence among three mammalian species.</title>
        <authorList>
            <person name="Andrews B.S."/>
            <person name="Rehemtulla A."/>
            <person name="Fowler B.J."/>
            <person name="Edgington T.S."/>
            <person name="Mackman N."/>
        </authorList>
    </citation>
    <scope>NUCLEOTIDE SEQUENCE [MRNA]</scope>
    <source>
        <tissue>Heart</tissue>
    </source>
</reference>
<reference key="2">
    <citation type="journal article" date="1991" name="Thromb. Haemost.">
        <title>Molecular cloning, characterization and expression of cDNA for rabbit brain tissue factor.</title>
        <authorList>
            <person name="Pawashe A."/>
            <person name="Ezekowitz M."/>
            <person name="Lin T.C."/>
            <person name="Horton R."/>
            <person name="Bach R."/>
            <person name="Konigsberg W."/>
        </authorList>
    </citation>
    <scope>NUCLEOTIDE SEQUENCE [MRNA] OF 33-292</scope>
    <source>
        <strain>New Zealand white</strain>
        <tissue>Brain</tissue>
    </source>
</reference>
<reference key="3">
    <citation type="journal article" date="1998" name="Protein Sci.">
        <title>Hinge bending within the cytokine receptor superfamily revealed by the 2.4 A crystal structure of the extracellular domain of rabbit tissue factor.</title>
        <authorList>
            <person name="Muller Y.A."/>
            <person name="Kelley R.F."/>
            <person name="de Vos A.M."/>
        </authorList>
    </citation>
    <scope>X-RAY CRYSTALLOGRAPHY (2.35 ANGSTROMS) OF 36-240</scope>
</reference>
<protein>
    <recommendedName>
        <fullName>Tissue factor</fullName>
        <shortName>TF</shortName>
    </recommendedName>
    <alternativeName>
        <fullName>Coagulation factor III</fullName>
    </alternativeName>
    <cdAntigenName>CD142</cdAntigenName>
</protein>
<name>TF_RABIT</name>
<organism>
    <name type="scientific">Oryctolagus cuniculus</name>
    <name type="common">Rabbit</name>
    <dbReference type="NCBI Taxonomy" id="9986"/>
    <lineage>
        <taxon>Eukaryota</taxon>
        <taxon>Metazoa</taxon>
        <taxon>Chordata</taxon>
        <taxon>Craniata</taxon>
        <taxon>Vertebrata</taxon>
        <taxon>Euteleostomi</taxon>
        <taxon>Mammalia</taxon>
        <taxon>Eutheria</taxon>
        <taxon>Euarchontoglires</taxon>
        <taxon>Glires</taxon>
        <taxon>Lagomorpha</taxon>
        <taxon>Leporidae</taxon>
        <taxon>Oryctolagus</taxon>
    </lineage>
</organism>